<evidence type="ECO:0000255" key="1">
    <source>
        <dbReference type="HAMAP-Rule" id="MF_00386"/>
    </source>
</evidence>
<evidence type="ECO:0000256" key="2">
    <source>
        <dbReference type="SAM" id="MobiDB-lite"/>
    </source>
</evidence>
<dbReference type="EMBL" id="CP000546">
    <property type="protein sequence ID" value="ABN03870.1"/>
    <property type="molecule type" value="Genomic_DNA"/>
</dbReference>
<dbReference type="KEGG" id="bml:BMA10229_A2240"/>
<dbReference type="HOGENOM" id="CLU_144811_2_2_4"/>
<dbReference type="Proteomes" id="UP000002283">
    <property type="component" value="Chromosome I"/>
</dbReference>
<dbReference type="GO" id="GO:0005886">
    <property type="term" value="C:plasma membrane"/>
    <property type="evidence" value="ECO:0007669"/>
    <property type="project" value="UniProtKB-SubCell"/>
</dbReference>
<dbReference type="HAMAP" id="MF_00386">
    <property type="entry name" value="UPF0161_YidD"/>
    <property type="match status" value="1"/>
</dbReference>
<dbReference type="InterPro" id="IPR002696">
    <property type="entry name" value="Membr_insert_effic_factor_YidD"/>
</dbReference>
<dbReference type="NCBIfam" id="TIGR00278">
    <property type="entry name" value="membrane protein insertion efficiency factor YidD"/>
    <property type="match status" value="1"/>
</dbReference>
<dbReference type="PANTHER" id="PTHR33383">
    <property type="entry name" value="MEMBRANE PROTEIN INSERTION EFFICIENCY FACTOR-RELATED"/>
    <property type="match status" value="1"/>
</dbReference>
<dbReference type="PANTHER" id="PTHR33383:SF1">
    <property type="entry name" value="MEMBRANE PROTEIN INSERTION EFFICIENCY FACTOR-RELATED"/>
    <property type="match status" value="1"/>
</dbReference>
<dbReference type="Pfam" id="PF01809">
    <property type="entry name" value="YidD"/>
    <property type="match status" value="1"/>
</dbReference>
<dbReference type="SMART" id="SM01234">
    <property type="entry name" value="Haemolytic"/>
    <property type="match status" value="1"/>
</dbReference>
<comment type="function">
    <text evidence="1">Could be involved in insertion of integral membrane proteins into the membrane.</text>
</comment>
<comment type="subcellular location">
    <subcellularLocation>
        <location evidence="1">Cell inner membrane</location>
        <topology evidence="1">Peripheral membrane protein</topology>
        <orientation evidence="1">Cytoplasmic side</orientation>
    </subcellularLocation>
</comment>
<comment type="similarity">
    <text evidence="1">Belongs to the UPF0161 family.</text>
</comment>
<gene>
    <name type="ordered locus">BMA10229_A2240</name>
</gene>
<feature type="chain" id="PRO_1000013071" description="Putative membrane protein insertion efficiency factor">
    <location>
        <begin position="1"/>
        <end position="89"/>
    </location>
</feature>
<feature type="region of interest" description="Disordered" evidence="2">
    <location>
        <begin position="68"/>
        <end position="89"/>
    </location>
</feature>
<feature type="compositionally biased region" description="Basic and acidic residues" evidence="2">
    <location>
        <begin position="77"/>
        <end position="89"/>
    </location>
</feature>
<organism>
    <name type="scientific">Burkholderia mallei (strain NCTC 10229)</name>
    <dbReference type="NCBI Taxonomy" id="412022"/>
    <lineage>
        <taxon>Bacteria</taxon>
        <taxon>Pseudomonadati</taxon>
        <taxon>Pseudomonadota</taxon>
        <taxon>Betaproteobacteria</taxon>
        <taxon>Burkholderiales</taxon>
        <taxon>Burkholderiaceae</taxon>
        <taxon>Burkholderia</taxon>
        <taxon>pseudomallei group</taxon>
    </lineage>
</organism>
<keyword id="KW-0997">Cell inner membrane</keyword>
<keyword id="KW-1003">Cell membrane</keyword>
<keyword id="KW-0472">Membrane</keyword>
<sequence length="89" mass="9817">MQTVLIALLRFYKLAVSPLLGSRCRFYPSCSDYAREAIQYHGAARGTYLAARRLCRCHPFSAGGVDLVPPPNSDARNAPHEAEASSHRL</sequence>
<reference key="1">
    <citation type="journal article" date="2010" name="Genome Biol. Evol.">
        <title>Continuing evolution of Burkholderia mallei through genome reduction and large-scale rearrangements.</title>
        <authorList>
            <person name="Losada L."/>
            <person name="Ronning C.M."/>
            <person name="DeShazer D."/>
            <person name="Woods D."/>
            <person name="Fedorova N."/>
            <person name="Kim H.S."/>
            <person name="Shabalina S.A."/>
            <person name="Pearson T.R."/>
            <person name="Brinkac L."/>
            <person name="Tan P."/>
            <person name="Nandi T."/>
            <person name="Crabtree J."/>
            <person name="Badger J."/>
            <person name="Beckstrom-Sternberg S."/>
            <person name="Saqib M."/>
            <person name="Schutzer S.E."/>
            <person name="Keim P."/>
            <person name="Nierman W.C."/>
        </authorList>
    </citation>
    <scope>NUCLEOTIDE SEQUENCE [LARGE SCALE GENOMIC DNA]</scope>
    <source>
        <strain>NCTC 10229</strain>
    </source>
</reference>
<name>YIDD_BURM9</name>
<proteinExistence type="inferred from homology"/>
<protein>
    <recommendedName>
        <fullName evidence="1">Putative membrane protein insertion efficiency factor</fullName>
    </recommendedName>
</protein>
<accession>A2S8D5</accession>